<reference key="1">
    <citation type="journal article" date="1998" name="Nature">
        <title>The genome sequence of Rickettsia prowazekii and the origin of mitochondria.</title>
        <authorList>
            <person name="Andersson S.G.E."/>
            <person name="Zomorodipour A."/>
            <person name="Andersson J.O."/>
            <person name="Sicheritz-Ponten T."/>
            <person name="Alsmark U.C.M."/>
            <person name="Podowski R.M."/>
            <person name="Naeslund A.K."/>
            <person name="Eriksson A.-S."/>
            <person name="Winkler H.H."/>
            <person name="Kurland C.G."/>
        </authorList>
    </citation>
    <scope>NUCLEOTIDE SEQUENCE [LARGE SCALE GENOMIC DNA]</scope>
    <source>
        <strain>Madrid E</strain>
    </source>
</reference>
<proteinExistence type="inferred from homology"/>
<comment type="function">
    <text evidence="1">Catalyzes the transfer of endogenously produced octanoic acid from octanoyl-acyl-carrier-protein onto the lipoyl domains of lipoate-dependent enzymes. Lipoyl-ACP can also act as a substrate although octanoyl-ACP is likely to be the physiological substrate.</text>
</comment>
<comment type="catalytic activity">
    <reaction evidence="1">
        <text>octanoyl-[ACP] + L-lysyl-[protein] = N(6)-octanoyl-L-lysyl-[protein] + holo-[ACP] + H(+)</text>
        <dbReference type="Rhea" id="RHEA:17665"/>
        <dbReference type="Rhea" id="RHEA-COMP:9636"/>
        <dbReference type="Rhea" id="RHEA-COMP:9685"/>
        <dbReference type="Rhea" id="RHEA-COMP:9752"/>
        <dbReference type="Rhea" id="RHEA-COMP:9928"/>
        <dbReference type="ChEBI" id="CHEBI:15378"/>
        <dbReference type="ChEBI" id="CHEBI:29969"/>
        <dbReference type="ChEBI" id="CHEBI:64479"/>
        <dbReference type="ChEBI" id="CHEBI:78463"/>
        <dbReference type="ChEBI" id="CHEBI:78809"/>
        <dbReference type="EC" id="2.3.1.181"/>
    </reaction>
</comment>
<comment type="pathway">
    <text evidence="1">Protein modification; protein lipoylation via endogenous pathway; protein N(6)-(lipoyl)lysine from octanoyl-[acyl-carrier-protein]: step 1/2.</text>
</comment>
<comment type="subcellular location">
    <subcellularLocation>
        <location evidence="1">Cytoplasm</location>
    </subcellularLocation>
</comment>
<comment type="miscellaneous">
    <text evidence="1">In the reaction, the free carboxyl group of octanoic acid is attached via an amide linkage to the epsilon-amino group of a specific lysine residue of lipoyl domains of lipoate-dependent enzymes.</text>
</comment>
<comment type="similarity">
    <text evidence="1">Belongs to the LipB family.</text>
</comment>
<keyword id="KW-0012">Acyltransferase</keyword>
<keyword id="KW-0963">Cytoplasm</keyword>
<keyword id="KW-1185">Reference proteome</keyword>
<keyword id="KW-0808">Transferase</keyword>
<name>LIPB_RICPR</name>
<accession>Q9ZC91</accession>
<organism>
    <name type="scientific">Rickettsia prowazekii (strain Madrid E)</name>
    <dbReference type="NCBI Taxonomy" id="272947"/>
    <lineage>
        <taxon>Bacteria</taxon>
        <taxon>Pseudomonadati</taxon>
        <taxon>Pseudomonadota</taxon>
        <taxon>Alphaproteobacteria</taxon>
        <taxon>Rickettsiales</taxon>
        <taxon>Rickettsiaceae</taxon>
        <taxon>Rickettsieae</taxon>
        <taxon>Rickettsia</taxon>
        <taxon>typhus group</taxon>
    </lineage>
</organism>
<gene>
    <name evidence="1" type="primary">lipB</name>
    <name type="ordered locus">RP876</name>
</gene>
<protein>
    <recommendedName>
        <fullName evidence="1">Octanoyltransferase</fullName>
        <ecNumber evidence="1">2.3.1.181</ecNumber>
    </recommendedName>
    <alternativeName>
        <fullName evidence="1">Lipoate-protein ligase B</fullName>
    </alternativeName>
    <alternativeName>
        <fullName evidence="1">Lipoyl/octanoyl transferase</fullName>
    </alternativeName>
    <alternativeName>
        <fullName evidence="1">Octanoyl-[acyl-carrier-protein]-protein N-octanoyltransferase</fullName>
    </alternativeName>
</protein>
<feature type="chain" id="PRO_0000062874" description="Octanoyltransferase">
    <location>
        <begin position="1"/>
        <end position="209"/>
    </location>
</feature>
<feature type="domain" description="BPL/LPL catalytic" evidence="2">
    <location>
        <begin position="30"/>
        <end position="209"/>
    </location>
</feature>
<feature type="active site" description="Acyl-thioester intermediate" evidence="1">
    <location>
        <position position="174"/>
    </location>
</feature>
<feature type="binding site" evidence="1">
    <location>
        <begin position="69"/>
        <end position="76"/>
    </location>
    <ligand>
        <name>substrate</name>
    </ligand>
</feature>
<feature type="binding site" evidence="1">
    <location>
        <begin position="143"/>
        <end position="145"/>
    </location>
    <ligand>
        <name>substrate</name>
    </ligand>
</feature>
<feature type="binding site" evidence="1">
    <location>
        <begin position="156"/>
        <end position="158"/>
    </location>
    <ligand>
        <name>substrate</name>
    </ligand>
</feature>
<feature type="site" description="Lowers pKa of active site Cys" evidence="1">
    <location>
        <position position="140"/>
    </location>
</feature>
<sequence>MIRFITLQNLMDYQVTLKLMEDYVNKVINDNEPEIVYLVEHSEVYTAGTNYKQEELLNYDDIPVIYTGRGGKFTFHGPGQRVIYPILNLALPNRHKDLKLYIKMLEEWIINSLNYFGIKGYLIKDKVGIWIKVNKGEFAKIAAIGVRVRKWVTYHGIAINISTDLCKFNGIIPCGLESSLVTSLNQLGIYVEMSEFDKIIQTEFNKIFK</sequence>
<evidence type="ECO:0000255" key="1">
    <source>
        <dbReference type="HAMAP-Rule" id="MF_00013"/>
    </source>
</evidence>
<evidence type="ECO:0000255" key="2">
    <source>
        <dbReference type="PROSITE-ProRule" id="PRU01067"/>
    </source>
</evidence>
<dbReference type="EC" id="2.3.1.181" evidence="1"/>
<dbReference type="EMBL" id="AJ235273">
    <property type="protein sequence ID" value="CAA15299.1"/>
    <property type="molecule type" value="Genomic_DNA"/>
</dbReference>
<dbReference type="PIR" id="C71650">
    <property type="entry name" value="C71650"/>
</dbReference>
<dbReference type="RefSeq" id="NP_221223.1">
    <property type="nucleotide sequence ID" value="NC_000963.1"/>
</dbReference>
<dbReference type="RefSeq" id="WP_010886386.1">
    <property type="nucleotide sequence ID" value="NC_000963.1"/>
</dbReference>
<dbReference type="SMR" id="Q9ZC91"/>
<dbReference type="STRING" id="272947.gene:17555945"/>
<dbReference type="EnsemblBacteria" id="CAA15299">
    <property type="protein sequence ID" value="CAA15299"/>
    <property type="gene ID" value="CAA15299"/>
</dbReference>
<dbReference type="GeneID" id="57569999"/>
<dbReference type="KEGG" id="rpr:RP876"/>
<dbReference type="PATRIC" id="fig|272947.5.peg.915"/>
<dbReference type="eggNOG" id="COG0321">
    <property type="taxonomic scope" value="Bacteria"/>
</dbReference>
<dbReference type="HOGENOM" id="CLU_035168_3_0_5"/>
<dbReference type="OrthoDB" id="9787061at2"/>
<dbReference type="UniPathway" id="UPA00538">
    <property type="reaction ID" value="UER00592"/>
</dbReference>
<dbReference type="Proteomes" id="UP000002480">
    <property type="component" value="Chromosome"/>
</dbReference>
<dbReference type="GO" id="GO:0005737">
    <property type="term" value="C:cytoplasm"/>
    <property type="evidence" value="ECO:0007669"/>
    <property type="project" value="UniProtKB-SubCell"/>
</dbReference>
<dbReference type="GO" id="GO:0033819">
    <property type="term" value="F:lipoyl(octanoyl) transferase activity"/>
    <property type="evidence" value="ECO:0007669"/>
    <property type="project" value="UniProtKB-EC"/>
</dbReference>
<dbReference type="GO" id="GO:0036211">
    <property type="term" value="P:protein modification process"/>
    <property type="evidence" value="ECO:0007669"/>
    <property type="project" value="InterPro"/>
</dbReference>
<dbReference type="CDD" id="cd16444">
    <property type="entry name" value="LipB"/>
    <property type="match status" value="1"/>
</dbReference>
<dbReference type="Gene3D" id="3.30.930.10">
    <property type="entry name" value="Bira Bifunctional Protein, Domain 2"/>
    <property type="match status" value="1"/>
</dbReference>
<dbReference type="HAMAP" id="MF_00013">
    <property type="entry name" value="LipB"/>
    <property type="match status" value="1"/>
</dbReference>
<dbReference type="InterPro" id="IPR045864">
    <property type="entry name" value="aa-tRNA-synth_II/BPL/LPL"/>
</dbReference>
<dbReference type="InterPro" id="IPR004143">
    <property type="entry name" value="BPL_LPL_catalytic"/>
</dbReference>
<dbReference type="InterPro" id="IPR000544">
    <property type="entry name" value="Octanoyltransferase"/>
</dbReference>
<dbReference type="InterPro" id="IPR020605">
    <property type="entry name" value="Octanoyltransferase_CS"/>
</dbReference>
<dbReference type="NCBIfam" id="TIGR00214">
    <property type="entry name" value="lipB"/>
    <property type="match status" value="1"/>
</dbReference>
<dbReference type="NCBIfam" id="NF010921">
    <property type="entry name" value="PRK14341.1"/>
    <property type="match status" value="1"/>
</dbReference>
<dbReference type="NCBIfam" id="NF010925">
    <property type="entry name" value="PRK14345.1"/>
    <property type="match status" value="1"/>
</dbReference>
<dbReference type="PANTHER" id="PTHR10993:SF7">
    <property type="entry name" value="LIPOYLTRANSFERASE 2, MITOCHONDRIAL-RELATED"/>
    <property type="match status" value="1"/>
</dbReference>
<dbReference type="PANTHER" id="PTHR10993">
    <property type="entry name" value="OCTANOYLTRANSFERASE"/>
    <property type="match status" value="1"/>
</dbReference>
<dbReference type="Pfam" id="PF21948">
    <property type="entry name" value="LplA-B_cat"/>
    <property type="match status" value="1"/>
</dbReference>
<dbReference type="PIRSF" id="PIRSF016262">
    <property type="entry name" value="LPLase"/>
    <property type="match status" value="1"/>
</dbReference>
<dbReference type="SUPFAM" id="SSF55681">
    <property type="entry name" value="Class II aaRS and biotin synthetases"/>
    <property type="match status" value="1"/>
</dbReference>
<dbReference type="PROSITE" id="PS51733">
    <property type="entry name" value="BPL_LPL_CATALYTIC"/>
    <property type="match status" value="1"/>
</dbReference>
<dbReference type="PROSITE" id="PS01313">
    <property type="entry name" value="LIPB"/>
    <property type="match status" value="1"/>
</dbReference>